<feature type="chain" id="PRO_0000288764" description="Dihydrolipoyllysine-residue acetyltransferase component of pyruvate dehydrogenase complex">
    <location>
        <begin position="1"/>
        <end position="412"/>
    </location>
</feature>
<feature type="domain" description="Lipoyl-binding" evidence="3">
    <location>
        <begin position="2"/>
        <end position="78"/>
    </location>
</feature>
<feature type="domain" description="Peripheral subunit-binding (PSBD)" evidence="4">
    <location>
        <begin position="132"/>
        <end position="169"/>
    </location>
</feature>
<feature type="active site" evidence="2">
    <location>
        <position position="385"/>
    </location>
</feature>
<feature type="modified residue" description="N6-lipoyllysine" evidence="1 3">
    <location>
        <position position="43"/>
    </location>
</feature>
<sequence>MPIKILMPVLSPTMTEGNLARWLKKEGDKVNPGEVIAEIETDKATMEVEAVDEGILAKIVIPQNSQNVPVNSLIAVLSEEGEEKTDIDAFIAKNNNVSPSPKTDANLPKPHENIAKVEEQVAVIKHDASKIFASPLAKRLAKMGNIRLESVKGSGPHGRIVKQDILSYTPSTVHNKIVSRNPEEYRLVPNNNIRKIIAKRLLESKQTVPHFYLSIECNVDKLLDIREDINKSFSEDKSTRISVNDFIILAVAKALQELPNANASWGEDAIRYHNNVDISVAVAIENGLVTPIVKNANQKNIIELSREMKELIKKAKDNKLTPEEFQGGGFTISNLGMYGIKNFNAIINPPQSCIMGVGASAKRAIVKNDQVTIATIMDVTLSADHRVVDGAVGAEFLAAFKKFIESPALMLI</sequence>
<reference key="1">
    <citation type="journal article" date="2005" name="PLoS Biol.">
        <title>The genome sequence of Rickettsia felis identifies the first putative conjugative plasmid in an obligate intracellular parasite.</title>
        <authorList>
            <person name="Ogata H."/>
            <person name="Renesto P."/>
            <person name="Audic S."/>
            <person name="Robert C."/>
            <person name="Blanc G."/>
            <person name="Fournier P.-E."/>
            <person name="Parinello H."/>
            <person name="Claverie J.-M."/>
            <person name="Raoult D."/>
        </authorList>
    </citation>
    <scope>NUCLEOTIDE SEQUENCE [LARGE SCALE GENOMIC DNA]</scope>
    <source>
        <strain>ATCC VR-1525 / URRWXCal2</strain>
    </source>
</reference>
<evidence type="ECO:0000250" key="1"/>
<evidence type="ECO:0000255" key="2"/>
<evidence type="ECO:0000255" key="3">
    <source>
        <dbReference type="PROSITE-ProRule" id="PRU01066"/>
    </source>
</evidence>
<evidence type="ECO:0000255" key="4">
    <source>
        <dbReference type="PROSITE-ProRule" id="PRU01170"/>
    </source>
</evidence>
<evidence type="ECO:0000305" key="5"/>
<protein>
    <recommendedName>
        <fullName>Dihydrolipoyllysine-residue acetyltransferase component of pyruvate dehydrogenase complex</fullName>
        <ecNumber>2.3.1.12</ecNumber>
    </recommendedName>
    <alternativeName>
        <fullName>Dihydrolipoamide acetyltransferase component of pyruvate dehydrogenase complex</fullName>
    </alternativeName>
    <alternativeName>
        <fullName>E2</fullName>
    </alternativeName>
</protein>
<keyword id="KW-0012">Acyltransferase</keyword>
<keyword id="KW-0450">Lipoyl</keyword>
<keyword id="KW-0808">Transferase</keyword>
<proteinExistence type="inferred from homology"/>
<dbReference type="EC" id="2.3.1.12"/>
<dbReference type="EMBL" id="CP000053">
    <property type="protein sequence ID" value="AAY61612.1"/>
    <property type="molecule type" value="Genomic_DNA"/>
</dbReference>
<dbReference type="SMR" id="Q4ULG1"/>
<dbReference type="STRING" id="315456.RF_0761"/>
<dbReference type="KEGG" id="rfe:RF_0761"/>
<dbReference type="eggNOG" id="COG0508">
    <property type="taxonomic scope" value="Bacteria"/>
</dbReference>
<dbReference type="HOGENOM" id="CLU_016733_10_2_5"/>
<dbReference type="OrthoDB" id="9805770at2"/>
<dbReference type="Proteomes" id="UP000008548">
    <property type="component" value="Chromosome"/>
</dbReference>
<dbReference type="GO" id="GO:0045254">
    <property type="term" value="C:pyruvate dehydrogenase complex"/>
    <property type="evidence" value="ECO:0007669"/>
    <property type="project" value="InterPro"/>
</dbReference>
<dbReference type="GO" id="GO:0004742">
    <property type="term" value="F:dihydrolipoyllysine-residue acetyltransferase activity"/>
    <property type="evidence" value="ECO:0007669"/>
    <property type="project" value="UniProtKB-EC"/>
</dbReference>
<dbReference type="GO" id="GO:0006086">
    <property type="term" value="P:pyruvate decarboxylation to acetyl-CoA"/>
    <property type="evidence" value="ECO:0007669"/>
    <property type="project" value="InterPro"/>
</dbReference>
<dbReference type="CDD" id="cd06849">
    <property type="entry name" value="lipoyl_domain"/>
    <property type="match status" value="1"/>
</dbReference>
<dbReference type="FunFam" id="2.40.50.100:FF:000010">
    <property type="entry name" value="Acetyltransferase component of pyruvate dehydrogenase complex"/>
    <property type="match status" value="1"/>
</dbReference>
<dbReference type="FunFam" id="3.30.559.10:FF:000003">
    <property type="entry name" value="Acetyltransferase component of pyruvate dehydrogenase complex"/>
    <property type="match status" value="1"/>
</dbReference>
<dbReference type="Gene3D" id="2.40.50.100">
    <property type="match status" value="1"/>
</dbReference>
<dbReference type="Gene3D" id="3.30.559.10">
    <property type="entry name" value="Chloramphenicol acetyltransferase-like domain"/>
    <property type="match status" value="1"/>
</dbReference>
<dbReference type="Gene3D" id="4.10.320.10">
    <property type="entry name" value="E3-binding domain"/>
    <property type="match status" value="1"/>
</dbReference>
<dbReference type="InterPro" id="IPR003016">
    <property type="entry name" value="2-oxoA_DH_lipoyl-BS"/>
</dbReference>
<dbReference type="InterPro" id="IPR001078">
    <property type="entry name" value="2-oxoacid_DH_actylTfrase"/>
</dbReference>
<dbReference type="InterPro" id="IPR000089">
    <property type="entry name" value="Biotin_lipoyl"/>
</dbReference>
<dbReference type="InterPro" id="IPR023213">
    <property type="entry name" value="CAT-like_dom_sf"/>
</dbReference>
<dbReference type="InterPro" id="IPR045257">
    <property type="entry name" value="E2/Pdx1"/>
</dbReference>
<dbReference type="InterPro" id="IPR036625">
    <property type="entry name" value="E3-bd_dom_sf"/>
</dbReference>
<dbReference type="InterPro" id="IPR006257">
    <property type="entry name" value="LAT1"/>
</dbReference>
<dbReference type="InterPro" id="IPR004167">
    <property type="entry name" value="PSBD"/>
</dbReference>
<dbReference type="InterPro" id="IPR011053">
    <property type="entry name" value="Single_hybrid_motif"/>
</dbReference>
<dbReference type="NCBIfam" id="TIGR01349">
    <property type="entry name" value="PDHac_trf_mito"/>
    <property type="match status" value="1"/>
</dbReference>
<dbReference type="PANTHER" id="PTHR23151">
    <property type="entry name" value="DIHYDROLIPOAMIDE ACETYL/SUCCINYL-TRANSFERASE-RELATED"/>
    <property type="match status" value="1"/>
</dbReference>
<dbReference type="PANTHER" id="PTHR23151:SF90">
    <property type="entry name" value="DIHYDROLIPOYLLYSINE-RESIDUE ACETYLTRANSFERASE COMPONENT OF PYRUVATE DEHYDROGENASE COMPLEX, MITOCHONDRIAL-RELATED"/>
    <property type="match status" value="1"/>
</dbReference>
<dbReference type="Pfam" id="PF00198">
    <property type="entry name" value="2-oxoacid_dh"/>
    <property type="match status" value="1"/>
</dbReference>
<dbReference type="Pfam" id="PF00364">
    <property type="entry name" value="Biotin_lipoyl"/>
    <property type="match status" value="1"/>
</dbReference>
<dbReference type="Pfam" id="PF02817">
    <property type="entry name" value="E3_binding"/>
    <property type="match status" value="1"/>
</dbReference>
<dbReference type="SUPFAM" id="SSF52777">
    <property type="entry name" value="CoA-dependent acyltransferases"/>
    <property type="match status" value="1"/>
</dbReference>
<dbReference type="SUPFAM" id="SSF47005">
    <property type="entry name" value="Peripheral subunit-binding domain of 2-oxo acid dehydrogenase complex"/>
    <property type="match status" value="1"/>
</dbReference>
<dbReference type="SUPFAM" id="SSF51230">
    <property type="entry name" value="Single hybrid motif"/>
    <property type="match status" value="1"/>
</dbReference>
<dbReference type="PROSITE" id="PS50968">
    <property type="entry name" value="BIOTINYL_LIPOYL"/>
    <property type="match status" value="1"/>
</dbReference>
<dbReference type="PROSITE" id="PS00189">
    <property type="entry name" value="LIPOYL"/>
    <property type="match status" value="1"/>
</dbReference>
<dbReference type="PROSITE" id="PS51826">
    <property type="entry name" value="PSBD"/>
    <property type="match status" value="1"/>
</dbReference>
<name>ODP2_RICFE</name>
<gene>
    <name type="primary">pdhC</name>
    <name type="ordered locus">RF_0761</name>
</gene>
<comment type="function">
    <text evidence="1">The pyruvate dehydrogenase complex catalyzes the overall conversion of pyruvate to acetyl-CoA and CO(2). It contains multiple copies of three enzymatic components: pyruvate dehydrogenase (E1), dihydrolipoamide acetyltransferase (E2) and lipoamide dehydrogenase (E3) (By similarity).</text>
</comment>
<comment type="catalytic activity">
    <reaction>
        <text>N(6)-[(R)-dihydrolipoyl]-L-lysyl-[protein] + acetyl-CoA = N(6)-[(R)-S(8)-acetyldihydrolipoyl]-L-lysyl-[protein] + CoA</text>
        <dbReference type="Rhea" id="RHEA:17017"/>
        <dbReference type="Rhea" id="RHEA-COMP:10475"/>
        <dbReference type="Rhea" id="RHEA-COMP:10478"/>
        <dbReference type="ChEBI" id="CHEBI:57287"/>
        <dbReference type="ChEBI" id="CHEBI:57288"/>
        <dbReference type="ChEBI" id="CHEBI:83100"/>
        <dbReference type="ChEBI" id="CHEBI:83111"/>
        <dbReference type="EC" id="2.3.1.12"/>
    </reaction>
</comment>
<comment type="cofactor">
    <cofactor evidence="1">
        <name>(R)-lipoate</name>
        <dbReference type="ChEBI" id="CHEBI:83088"/>
    </cofactor>
    <text evidence="1">Binds 1 lipoyl cofactor covalently.</text>
</comment>
<comment type="subunit">
    <text evidence="1">Forms a 24-polypeptide structural core with octahedral symmetry.</text>
</comment>
<comment type="similarity">
    <text evidence="5">Belongs to the 2-oxoacid dehydrogenase family.</text>
</comment>
<organism>
    <name type="scientific">Rickettsia felis (strain ATCC VR-1525 / URRWXCal2)</name>
    <name type="common">Rickettsia azadi</name>
    <dbReference type="NCBI Taxonomy" id="315456"/>
    <lineage>
        <taxon>Bacteria</taxon>
        <taxon>Pseudomonadati</taxon>
        <taxon>Pseudomonadota</taxon>
        <taxon>Alphaproteobacteria</taxon>
        <taxon>Rickettsiales</taxon>
        <taxon>Rickettsiaceae</taxon>
        <taxon>Rickettsieae</taxon>
        <taxon>Rickettsia</taxon>
        <taxon>spotted fever group</taxon>
    </lineage>
</organism>
<accession>Q4ULG1</accession>